<accession>Q1D801</accession>
<protein>
    <recommendedName>
        <fullName evidence="1">ATP-dependent protease ATPase subunit HslU</fullName>
    </recommendedName>
    <alternativeName>
        <fullName evidence="1">Unfoldase HslU</fullName>
    </alternativeName>
</protein>
<keyword id="KW-0067">ATP-binding</keyword>
<keyword id="KW-0143">Chaperone</keyword>
<keyword id="KW-0963">Cytoplasm</keyword>
<keyword id="KW-0547">Nucleotide-binding</keyword>
<keyword id="KW-1185">Reference proteome</keyword>
<keyword id="KW-0346">Stress response</keyword>
<evidence type="ECO:0000255" key="1">
    <source>
        <dbReference type="HAMAP-Rule" id="MF_00249"/>
    </source>
</evidence>
<name>HSLU_MYXXD</name>
<organism>
    <name type="scientific">Myxococcus xanthus (strain DK1622)</name>
    <dbReference type="NCBI Taxonomy" id="246197"/>
    <lineage>
        <taxon>Bacteria</taxon>
        <taxon>Pseudomonadati</taxon>
        <taxon>Myxococcota</taxon>
        <taxon>Myxococcia</taxon>
        <taxon>Myxococcales</taxon>
        <taxon>Cystobacterineae</taxon>
        <taxon>Myxococcaceae</taxon>
        <taxon>Myxococcus</taxon>
    </lineage>
</organism>
<comment type="function">
    <text evidence="1">ATPase subunit of a proteasome-like degradation complex; this subunit has chaperone activity. The binding of ATP and its subsequent hydrolysis by HslU are essential for unfolding of protein substrates subsequently hydrolyzed by HslV. HslU recognizes the N-terminal part of its protein substrates and unfolds these before they are guided to HslV for hydrolysis.</text>
</comment>
<comment type="subunit">
    <text evidence="1">A double ring-shaped homohexamer of HslV is capped on each side by a ring-shaped HslU homohexamer. The assembly of the HslU/HslV complex is dependent on binding of ATP.</text>
</comment>
<comment type="subcellular location">
    <subcellularLocation>
        <location evidence="1">Cytoplasm</location>
    </subcellularLocation>
</comment>
<comment type="similarity">
    <text evidence="1">Belongs to the ClpX chaperone family. HslU subfamily.</text>
</comment>
<feature type="chain" id="PRO_1000125445" description="ATP-dependent protease ATPase subunit HslU">
    <location>
        <begin position="1"/>
        <end position="459"/>
    </location>
</feature>
<feature type="binding site" evidence="1">
    <location>
        <position position="18"/>
    </location>
    <ligand>
        <name>ATP</name>
        <dbReference type="ChEBI" id="CHEBI:30616"/>
    </ligand>
</feature>
<feature type="binding site" evidence="1">
    <location>
        <begin position="60"/>
        <end position="65"/>
    </location>
    <ligand>
        <name>ATP</name>
        <dbReference type="ChEBI" id="CHEBI:30616"/>
    </ligand>
</feature>
<feature type="binding site" evidence="1">
    <location>
        <position position="269"/>
    </location>
    <ligand>
        <name>ATP</name>
        <dbReference type="ChEBI" id="CHEBI:30616"/>
    </ligand>
</feature>
<feature type="binding site" evidence="1">
    <location>
        <position position="337"/>
    </location>
    <ligand>
        <name>ATP</name>
        <dbReference type="ChEBI" id="CHEBI:30616"/>
    </ligand>
</feature>
<feature type="binding site" evidence="1">
    <location>
        <position position="409"/>
    </location>
    <ligand>
        <name>ATP</name>
        <dbReference type="ChEBI" id="CHEBI:30616"/>
    </ligand>
</feature>
<gene>
    <name evidence="1" type="primary">hslU</name>
    <name type="ordered locus">MXAN_3013</name>
</gene>
<proteinExistence type="inferred from homology"/>
<dbReference type="EMBL" id="CP000113">
    <property type="protein sequence ID" value="ABF90379.1"/>
    <property type="molecule type" value="Genomic_DNA"/>
</dbReference>
<dbReference type="SMR" id="Q1D801"/>
<dbReference type="STRING" id="246197.MXAN_3013"/>
<dbReference type="EnsemblBacteria" id="ABF90379">
    <property type="protein sequence ID" value="ABF90379"/>
    <property type="gene ID" value="MXAN_3013"/>
</dbReference>
<dbReference type="KEGG" id="mxa:MXAN_3013"/>
<dbReference type="eggNOG" id="COG1220">
    <property type="taxonomic scope" value="Bacteria"/>
</dbReference>
<dbReference type="HOGENOM" id="CLU_033123_0_0_7"/>
<dbReference type="Proteomes" id="UP000002402">
    <property type="component" value="Chromosome"/>
</dbReference>
<dbReference type="GO" id="GO:0009376">
    <property type="term" value="C:HslUV protease complex"/>
    <property type="evidence" value="ECO:0007669"/>
    <property type="project" value="UniProtKB-UniRule"/>
</dbReference>
<dbReference type="GO" id="GO:0005524">
    <property type="term" value="F:ATP binding"/>
    <property type="evidence" value="ECO:0007669"/>
    <property type="project" value="UniProtKB-UniRule"/>
</dbReference>
<dbReference type="GO" id="GO:0016887">
    <property type="term" value="F:ATP hydrolysis activity"/>
    <property type="evidence" value="ECO:0007669"/>
    <property type="project" value="InterPro"/>
</dbReference>
<dbReference type="GO" id="GO:0008233">
    <property type="term" value="F:peptidase activity"/>
    <property type="evidence" value="ECO:0007669"/>
    <property type="project" value="InterPro"/>
</dbReference>
<dbReference type="GO" id="GO:0036402">
    <property type="term" value="F:proteasome-activating activity"/>
    <property type="evidence" value="ECO:0007669"/>
    <property type="project" value="UniProtKB-UniRule"/>
</dbReference>
<dbReference type="GO" id="GO:0043335">
    <property type="term" value="P:protein unfolding"/>
    <property type="evidence" value="ECO:0007669"/>
    <property type="project" value="UniProtKB-UniRule"/>
</dbReference>
<dbReference type="GO" id="GO:0051603">
    <property type="term" value="P:proteolysis involved in protein catabolic process"/>
    <property type="evidence" value="ECO:0007669"/>
    <property type="project" value="TreeGrafter"/>
</dbReference>
<dbReference type="CDD" id="cd19498">
    <property type="entry name" value="RecA-like_HslU"/>
    <property type="match status" value="1"/>
</dbReference>
<dbReference type="FunFam" id="3.40.50.300:FF:000220">
    <property type="entry name" value="ATP-dependent protease ATPase subunit HslU"/>
    <property type="match status" value="1"/>
</dbReference>
<dbReference type="Gene3D" id="1.10.8.60">
    <property type="match status" value="1"/>
</dbReference>
<dbReference type="Gene3D" id="3.40.50.300">
    <property type="entry name" value="P-loop containing nucleotide triphosphate hydrolases"/>
    <property type="match status" value="2"/>
</dbReference>
<dbReference type="HAMAP" id="MF_00249">
    <property type="entry name" value="HslU"/>
    <property type="match status" value="1"/>
</dbReference>
<dbReference type="InterPro" id="IPR003593">
    <property type="entry name" value="AAA+_ATPase"/>
</dbReference>
<dbReference type="InterPro" id="IPR050052">
    <property type="entry name" value="ATP-dep_Clp_protease_ClpX"/>
</dbReference>
<dbReference type="InterPro" id="IPR003959">
    <property type="entry name" value="ATPase_AAA_core"/>
</dbReference>
<dbReference type="InterPro" id="IPR019489">
    <property type="entry name" value="Clp_ATPase_C"/>
</dbReference>
<dbReference type="InterPro" id="IPR004491">
    <property type="entry name" value="HslU"/>
</dbReference>
<dbReference type="InterPro" id="IPR027417">
    <property type="entry name" value="P-loop_NTPase"/>
</dbReference>
<dbReference type="NCBIfam" id="TIGR00390">
    <property type="entry name" value="hslU"/>
    <property type="match status" value="1"/>
</dbReference>
<dbReference type="NCBIfam" id="NF003544">
    <property type="entry name" value="PRK05201.1"/>
    <property type="match status" value="1"/>
</dbReference>
<dbReference type="PANTHER" id="PTHR48102">
    <property type="entry name" value="ATP-DEPENDENT CLP PROTEASE ATP-BINDING SUBUNIT CLPX-LIKE, MITOCHONDRIAL-RELATED"/>
    <property type="match status" value="1"/>
</dbReference>
<dbReference type="PANTHER" id="PTHR48102:SF3">
    <property type="entry name" value="ATP-DEPENDENT PROTEASE ATPASE SUBUNIT HSLU"/>
    <property type="match status" value="1"/>
</dbReference>
<dbReference type="Pfam" id="PF00004">
    <property type="entry name" value="AAA"/>
    <property type="match status" value="1"/>
</dbReference>
<dbReference type="Pfam" id="PF07724">
    <property type="entry name" value="AAA_2"/>
    <property type="match status" value="1"/>
</dbReference>
<dbReference type="SMART" id="SM00382">
    <property type="entry name" value="AAA"/>
    <property type="match status" value="1"/>
</dbReference>
<dbReference type="SMART" id="SM01086">
    <property type="entry name" value="ClpB_D2-small"/>
    <property type="match status" value="1"/>
</dbReference>
<dbReference type="SUPFAM" id="SSF52540">
    <property type="entry name" value="P-loop containing nucleoside triphosphate hydrolases"/>
    <property type="match status" value="1"/>
</dbReference>
<reference key="1">
    <citation type="journal article" date="2006" name="Proc. Natl. Acad. Sci. U.S.A.">
        <title>Evolution of sensory complexity recorded in a myxobacterial genome.</title>
        <authorList>
            <person name="Goldman B.S."/>
            <person name="Nierman W.C."/>
            <person name="Kaiser D."/>
            <person name="Slater S.C."/>
            <person name="Durkin A.S."/>
            <person name="Eisen J.A."/>
            <person name="Ronning C.M."/>
            <person name="Barbazuk W.B."/>
            <person name="Blanchard M."/>
            <person name="Field C."/>
            <person name="Halling C."/>
            <person name="Hinkle G."/>
            <person name="Iartchuk O."/>
            <person name="Kim H.S."/>
            <person name="Mackenzie C."/>
            <person name="Madupu R."/>
            <person name="Miller N."/>
            <person name="Shvartsbeyn A."/>
            <person name="Sullivan S.A."/>
            <person name="Vaudin M."/>
            <person name="Wiegand R."/>
            <person name="Kaplan H.B."/>
        </authorList>
    </citation>
    <scope>NUCLEOTIDE SEQUENCE [LARGE SCALE GENOMIC DNA]</scope>
    <source>
        <strain>DK1622</strain>
    </source>
</reference>
<sequence length="459" mass="50896">MSAFTPREVVSELDRYIVGQNAAKRAVAIALRNRWRRQQVDDDLRDEIHPKNIIMIGPTGVGKTEIARRLAKLAQAPFVKVEASKFTEVGYVGRDVESMIRDLVEAAIALVREEETEKVGPRAEELAEDRLIELMQGGGVKSSSATPPFGFAPPPPPPVQRVSDSAREKFRAQLRAGTLDDVEVEVETAESSPTFMRGFSGQGMEEIGVNLQDLFKNVPGMNKTRRRRVRVPEALQLLRKEEAAKLVDPDRVQREAVARAEMNGIIFIDEIDKIASREGGKGGGGPDVSREGVQRDILPIVEGSTINTKYGVVKTDHMLFIAAGAFHVSKPSDLIPELQGRFPIRVELEPLTGEDLVRILREPKNSLLRQYTALLSTEGVRLSFTDDAVTELARIAQQANESTANIGARRLHTILERLLDEVSFSASEMGPRDFQVDAAYVRERLAAIVQDEDLSRYIL</sequence>